<comment type="function">
    <text evidence="1">The RuvA-RuvB-RuvC complex processes Holliday junction (HJ) DNA during genetic recombination and DNA repair, while the RuvA-RuvB complex plays an important role in the rescue of blocked DNA replication forks via replication fork reversal (RFR). RuvA specifically binds to HJ cruciform DNA, conferring on it an open structure. The RuvB hexamer acts as an ATP-dependent pump, pulling dsDNA into and through the RuvAB complex. RuvB forms 2 homohexamers on either side of HJ DNA bound by 1 or 2 RuvA tetramers; 4 subunits per hexamer contact DNA at a time. Coordinated motions by a converter formed by DNA-disengaged RuvB subunits stimulates ATP hydrolysis and nucleotide exchange. Immobilization of the converter enables RuvB to convert the ATP-contained energy into a lever motion, pulling 2 nucleotides of DNA out of the RuvA tetramer per ATP hydrolyzed, thus driving DNA branch migration. The RuvB motors rotate together with the DNA substrate, which together with the progressing nucleotide cycle form the mechanistic basis for DNA recombination by continuous HJ branch migration. Branch migration allows RuvC to scan DNA until it finds its consensus sequence, where it cleaves and resolves cruciform DNA.</text>
</comment>
<comment type="function">
    <text evidence="3">Participates in UV-tolerance of Synechocystis PCC 6803.</text>
</comment>
<comment type="catalytic activity">
    <reaction evidence="1">
        <text>ATP + H2O = ADP + phosphate + H(+)</text>
        <dbReference type="Rhea" id="RHEA:13065"/>
        <dbReference type="ChEBI" id="CHEBI:15377"/>
        <dbReference type="ChEBI" id="CHEBI:15378"/>
        <dbReference type="ChEBI" id="CHEBI:30616"/>
        <dbReference type="ChEBI" id="CHEBI:43474"/>
        <dbReference type="ChEBI" id="CHEBI:456216"/>
    </reaction>
</comment>
<comment type="subunit">
    <text evidence="1">Homohexamer. Forms an RuvA(8)-RuvB(12)-Holliday junction (HJ) complex. HJ DNA is sandwiched between 2 RuvA tetramers; dsDNA enters through RuvA and exits via RuvB. An RuvB hexamer assembles on each DNA strand where it exits the tetramer. Each RuvB hexamer is contacted by two RuvA subunits (via domain III) on 2 adjacent RuvB subunits; this complex drives branch migration. In the full resolvosome a probable DNA-RuvA(4)-RuvB(12)-RuvC(2) complex forms which resolves the HJ.</text>
</comment>
<comment type="subcellular location">
    <subcellularLocation>
        <location evidence="1">Cytoplasm</location>
    </subcellularLocation>
</comment>
<comment type="induction">
    <text evidence="5">2-3 fold induced by UV light.</text>
</comment>
<comment type="domain">
    <text evidence="1">Has 3 domains, the large (RuvB-L) and small ATPase (RuvB-S) domains and the C-terminal head (RuvB-H) domain. The head domain binds DNA, while the ATPase domains jointly bind ATP, ADP or are empty depending on the state of the subunit in the translocation cycle. During a single DNA translocation step the structure of each domain remains the same, but their relative positions change.</text>
</comment>
<comment type="disruption phenotype">
    <text evidence="3">No visible phenotype; cells are more sensitive to UV-C light, H(2)O(2), CdSO(4), SeO(3) and SeO(4).</text>
</comment>
<comment type="miscellaneous">
    <text evidence="5">This bacterium is considerably more resistant to UV and gamma irradiation than E.coli; the E.coli-like SOS regulon model is not an appropriate model for DNA repair in this cyanobacterium.</text>
</comment>
<comment type="similarity">
    <text evidence="1">Belongs to the RuvB family.</text>
</comment>
<organism>
    <name type="scientific">Synechocystis sp. (strain ATCC 27184 / PCC 6803 / Kazusa)</name>
    <dbReference type="NCBI Taxonomy" id="1111708"/>
    <lineage>
        <taxon>Bacteria</taxon>
        <taxon>Bacillati</taxon>
        <taxon>Cyanobacteriota</taxon>
        <taxon>Cyanophyceae</taxon>
        <taxon>Synechococcales</taxon>
        <taxon>Merismopediaceae</taxon>
        <taxon>Synechocystis</taxon>
    </lineage>
</organism>
<gene>
    <name evidence="1 4" type="primary">ruvB</name>
    <name type="ordered locus">sll0613</name>
</gene>
<proteinExistence type="evidence at transcript level"/>
<reference key="1">
    <citation type="submission" date="1996-04" db="EMBL/GenBank/DDBJ databases">
        <title>Cloning, expression and inactivation of the ruvB gene from the cyanobacterium Synechocystis PCC6803.</title>
        <authorList>
            <person name="Bulteau S."/>
            <person name="Cassier-Chauvat C."/>
            <person name="Chauvat F."/>
        </authorList>
    </citation>
    <scope>NUCLEOTIDE SEQUENCE [GENOMIC DNA]</scope>
    <source>
        <strain>ATCC 27184 / PCC 6803 / Kazusa</strain>
    </source>
</reference>
<reference key="2">
    <citation type="journal article" date="1995" name="DNA Res.">
        <title>Sequence analysis of the genome of the unicellular cyanobacterium Synechocystis sp. strain PCC6803. I. Sequence features in the 1 Mb region from map positions 64% to 92% of the genome.</title>
        <authorList>
            <person name="Kaneko T."/>
            <person name="Tanaka A."/>
            <person name="Sato S."/>
            <person name="Kotani H."/>
            <person name="Sazuka T."/>
            <person name="Miyajima N."/>
            <person name="Sugiura M."/>
            <person name="Tabata S."/>
        </authorList>
    </citation>
    <scope>NUCLEOTIDE SEQUENCE [LARGE SCALE GENOMIC DNA]</scope>
    <source>
        <strain>ATCC 27184 / PCC 6803 / N-1</strain>
    </source>
</reference>
<reference key="3">
    <citation type="journal article" date="1996" name="DNA Res.">
        <title>Sequence analysis of the genome of the unicellular cyanobacterium Synechocystis sp. strain PCC6803. II. Sequence determination of the entire genome and assignment of potential protein-coding regions.</title>
        <authorList>
            <person name="Kaneko T."/>
            <person name="Sato S."/>
            <person name="Kotani H."/>
            <person name="Tanaka A."/>
            <person name="Asamizu E."/>
            <person name="Nakamura Y."/>
            <person name="Miyajima N."/>
            <person name="Hirosawa M."/>
            <person name="Sugiura M."/>
            <person name="Sasamoto S."/>
            <person name="Kimura T."/>
            <person name="Hosouchi T."/>
            <person name="Matsuno A."/>
            <person name="Muraki A."/>
            <person name="Nakazaki N."/>
            <person name="Naruo K."/>
            <person name="Okumura S."/>
            <person name="Shimpo S."/>
            <person name="Takeuchi C."/>
            <person name="Wada T."/>
            <person name="Watanabe A."/>
            <person name="Yamada M."/>
            <person name="Yasuda M."/>
            <person name="Tabata S."/>
        </authorList>
    </citation>
    <scope>NUCLEOTIDE SEQUENCE [LARGE SCALE GENOMIC DNA]</scope>
    <source>
        <strain>ATCC 27184 / PCC 6803 / Kazusa</strain>
    </source>
</reference>
<reference key="4">
    <citation type="journal article" date="2004" name="Mol. Microbiol.">
        <title>Function and regulation of the cyanobacterial genes lexA, recA and ruvB: LexA is critical to the survival of cells facing inorganic carbon starvation.</title>
        <authorList>
            <person name="Domain F."/>
            <person name="Houot L."/>
            <person name="Chauvat F."/>
            <person name="Cassier-Chauvat C."/>
        </authorList>
    </citation>
    <scope>FUNCTION</scope>
    <scope>INDUCTION BY UV</scope>
    <scope>DISRUPTION PHENOTYPE</scope>
    <source>
        <strain>ATCC 27184 / PCC 6803 / Kazusa</strain>
    </source>
</reference>
<keyword id="KW-0067">ATP-binding</keyword>
<keyword id="KW-0963">Cytoplasm</keyword>
<keyword id="KW-0227">DNA damage</keyword>
<keyword id="KW-0233">DNA recombination</keyword>
<keyword id="KW-0234">DNA repair</keyword>
<keyword id="KW-0238">DNA-binding</keyword>
<keyword id="KW-0378">Hydrolase</keyword>
<keyword id="KW-0547">Nucleotide-binding</keyword>
<keyword id="KW-1185">Reference proteome</keyword>
<feature type="chain" id="PRO_0000165616" description="Holliday junction branch migration complex subunit RuvB">
    <location>
        <begin position="1"/>
        <end position="361"/>
    </location>
</feature>
<feature type="region of interest" description="Disordered" evidence="2">
    <location>
        <begin position="1"/>
        <end position="41"/>
    </location>
</feature>
<feature type="region of interest" description="Large ATPase domain (RuvB-L)" evidence="1">
    <location>
        <begin position="13"/>
        <end position="203"/>
    </location>
</feature>
<feature type="region of interest" description="Small ATPAse domain (RuvB-S)" evidence="1">
    <location>
        <begin position="204"/>
        <end position="274"/>
    </location>
</feature>
<feature type="region of interest" description="Head domain (RuvB-H)" evidence="1">
    <location>
        <begin position="277"/>
        <end position="361"/>
    </location>
</feature>
<feature type="compositionally biased region" description="Polar residues" evidence="2">
    <location>
        <begin position="1"/>
        <end position="15"/>
    </location>
</feature>
<feature type="compositionally biased region" description="Polar residues" evidence="2">
    <location>
        <begin position="28"/>
        <end position="40"/>
    </location>
</feature>
<feature type="binding site" evidence="1">
    <location>
        <position position="42"/>
    </location>
    <ligand>
        <name>ATP</name>
        <dbReference type="ChEBI" id="CHEBI:30616"/>
    </ligand>
</feature>
<feature type="binding site" evidence="1">
    <location>
        <position position="43"/>
    </location>
    <ligand>
        <name>ATP</name>
        <dbReference type="ChEBI" id="CHEBI:30616"/>
    </ligand>
</feature>
<feature type="binding site" evidence="1">
    <location>
        <position position="84"/>
    </location>
    <ligand>
        <name>ATP</name>
        <dbReference type="ChEBI" id="CHEBI:30616"/>
    </ligand>
</feature>
<feature type="binding site" evidence="1">
    <location>
        <position position="87"/>
    </location>
    <ligand>
        <name>ATP</name>
        <dbReference type="ChEBI" id="CHEBI:30616"/>
    </ligand>
</feature>
<feature type="binding site" evidence="1">
    <location>
        <position position="88"/>
    </location>
    <ligand>
        <name>ATP</name>
        <dbReference type="ChEBI" id="CHEBI:30616"/>
    </ligand>
</feature>
<feature type="binding site" evidence="1">
    <location>
        <position position="88"/>
    </location>
    <ligand>
        <name>Mg(2+)</name>
        <dbReference type="ChEBI" id="CHEBI:18420"/>
    </ligand>
</feature>
<feature type="binding site" evidence="1">
    <location>
        <position position="89"/>
    </location>
    <ligand>
        <name>ATP</name>
        <dbReference type="ChEBI" id="CHEBI:30616"/>
    </ligand>
</feature>
<feature type="binding site" evidence="1">
    <location>
        <begin position="150"/>
        <end position="152"/>
    </location>
    <ligand>
        <name>ATP</name>
        <dbReference type="ChEBI" id="CHEBI:30616"/>
    </ligand>
</feature>
<feature type="binding site" evidence="1">
    <location>
        <position position="193"/>
    </location>
    <ligand>
        <name>ATP</name>
        <dbReference type="ChEBI" id="CHEBI:30616"/>
    </ligand>
</feature>
<feature type="binding site" evidence="1">
    <location>
        <position position="203"/>
    </location>
    <ligand>
        <name>ATP</name>
        <dbReference type="ChEBI" id="CHEBI:30616"/>
    </ligand>
</feature>
<feature type="binding site" evidence="1">
    <location>
        <position position="240"/>
    </location>
    <ligand>
        <name>ATP</name>
        <dbReference type="ChEBI" id="CHEBI:30616"/>
    </ligand>
</feature>
<feature type="binding site" evidence="1">
    <location>
        <position position="332"/>
    </location>
    <ligand>
        <name>DNA</name>
        <dbReference type="ChEBI" id="CHEBI:16991"/>
    </ligand>
</feature>
<feature type="binding site" evidence="1">
    <location>
        <position position="337"/>
    </location>
    <ligand>
        <name>DNA</name>
        <dbReference type="ChEBI" id="CHEBI:16991"/>
    </ligand>
</feature>
<sequence length="361" mass="40053">MAIKRSGNNNLSPNVKSDLLSPEVIPQERSTSPELEQQEASLRPQRLADYIGQRDLKEVLRIAIQAAQGRQEAIDHLLLYGPPGLGKTTLALILAEEMQVRCKITAAPALERPRDITGLLLALQPGDILFIDEIHRLNRLTEELLYPAMEDFRLDITMGKGQSAKVRSLKLAHFTLVGATTKVGSLTSPLRDRFGLIQRLRFYEVDELQQIILRTAGILSVSISPTGAEAIAMRARGTPRIANRLLKRVRDYAQVKQQPEIDPALASEALDLYQVDKRGLDWTDRLVLQTLIEQFQGGPTGLEAIAAATGEDAKTIEEVYEPYLLQIGYLARTSRGRIATTAAYEHLGLTPPTPLLPWKES</sequence>
<accession>Q57396</accession>
<evidence type="ECO:0000255" key="1">
    <source>
        <dbReference type="HAMAP-Rule" id="MF_00016"/>
    </source>
</evidence>
<evidence type="ECO:0000256" key="2">
    <source>
        <dbReference type="SAM" id="MobiDB-lite"/>
    </source>
</evidence>
<evidence type="ECO:0000269" key="3">
    <source>
    </source>
</evidence>
<evidence type="ECO:0000303" key="4">
    <source>
    </source>
</evidence>
<evidence type="ECO:0000305" key="5">
    <source>
    </source>
</evidence>
<dbReference type="EC" id="3.6.4.-" evidence="1"/>
<dbReference type="EMBL" id="U38892">
    <property type="protein sequence ID" value="AAA96396.1"/>
    <property type="molecule type" value="Genomic_DNA"/>
</dbReference>
<dbReference type="EMBL" id="BA000022">
    <property type="protein sequence ID" value="BAA10350.1"/>
    <property type="molecule type" value="Genomic_DNA"/>
</dbReference>
<dbReference type="PIR" id="S76504">
    <property type="entry name" value="S76504"/>
</dbReference>
<dbReference type="SMR" id="Q57396"/>
<dbReference type="FunCoup" id="Q57396">
    <property type="interactions" value="360"/>
</dbReference>
<dbReference type="STRING" id="1148.gene:10499851"/>
<dbReference type="PaxDb" id="1148-1001619"/>
<dbReference type="EnsemblBacteria" id="BAA10350">
    <property type="protein sequence ID" value="BAA10350"/>
    <property type="gene ID" value="BAA10350"/>
</dbReference>
<dbReference type="KEGG" id="syn:sll0613"/>
<dbReference type="eggNOG" id="COG2255">
    <property type="taxonomic scope" value="Bacteria"/>
</dbReference>
<dbReference type="InParanoid" id="Q57396"/>
<dbReference type="PhylomeDB" id="Q57396"/>
<dbReference type="Proteomes" id="UP000001425">
    <property type="component" value="Chromosome"/>
</dbReference>
<dbReference type="GO" id="GO:0005737">
    <property type="term" value="C:cytoplasm"/>
    <property type="evidence" value="ECO:0007669"/>
    <property type="project" value="UniProtKB-SubCell"/>
</dbReference>
<dbReference type="GO" id="GO:0048476">
    <property type="term" value="C:Holliday junction resolvase complex"/>
    <property type="evidence" value="ECO:0007669"/>
    <property type="project" value="UniProtKB-UniRule"/>
</dbReference>
<dbReference type="GO" id="GO:0005524">
    <property type="term" value="F:ATP binding"/>
    <property type="evidence" value="ECO:0007669"/>
    <property type="project" value="UniProtKB-UniRule"/>
</dbReference>
<dbReference type="GO" id="GO:0016887">
    <property type="term" value="F:ATP hydrolysis activity"/>
    <property type="evidence" value="ECO:0007669"/>
    <property type="project" value="InterPro"/>
</dbReference>
<dbReference type="GO" id="GO:0000400">
    <property type="term" value="F:four-way junction DNA binding"/>
    <property type="evidence" value="ECO:0007669"/>
    <property type="project" value="UniProtKB-UniRule"/>
</dbReference>
<dbReference type="GO" id="GO:0009378">
    <property type="term" value="F:four-way junction helicase activity"/>
    <property type="evidence" value="ECO:0007669"/>
    <property type="project" value="InterPro"/>
</dbReference>
<dbReference type="GO" id="GO:0006310">
    <property type="term" value="P:DNA recombination"/>
    <property type="evidence" value="ECO:0007669"/>
    <property type="project" value="UniProtKB-UniRule"/>
</dbReference>
<dbReference type="GO" id="GO:0006281">
    <property type="term" value="P:DNA repair"/>
    <property type="evidence" value="ECO:0007669"/>
    <property type="project" value="UniProtKB-UniRule"/>
</dbReference>
<dbReference type="CDD" id="cd00009">
    <property type="entry name" value="AAA"/>
    <property type="match status" value="1"/>
</dbReference>
<dbReference type="Gene3D" id="1.10.8.60">
    <property type="match status" value="1"/>
</dbReference>
<dbReference type="Gene3D" id="3.40.50.300">
    <property type="entry name" value="P-loop containing nucleotide triphosphate hydrolases"/>
    <property type="match status" value="1"/>
</dbReference>
<dbReference type="Gene3D" id="1.10.10.10">
    <property type="entry name" value="Winged helix-like DNA-binding domain superfamily/Winged helix DNA-binding domain"/>
    <property type="match status" value="1"/>
</dbReference>
<dbReference type="HAMAP" id="MF_00016">
    <property type="entry name" value="DNA_HJ_migration_RuvB"/>
    <property type="match status" value="1"/>
</dbReference>
<dbReference type="InterPro" id="IPR003593">
    <property type="entry name" value="AAA+_ATPase"/>
</dbReference>
<dbReference type="InterPro" id="IPR041445">
    <property type="entry name" value="AAA_lid_4"/>
</dbReference>
<dbReference type="InterPro" id="IPR004605">
    <property type="entry name" value="DNA_helicase_Holl-junc_RuvB"/>
</dbReference>
<dbReference type="InterPro" id="IPR027417">
    <property type="entry name" value="P-loop_NTPase"/>
</dbReference>
<dbReference type="InterPro" id="IPR008824">
    <property type="entry name" value="RuvB-like_N"/>
</dbReference>
<dbReference type="InterPro" id="IPR008823">
    <property type="entry name" value="RuvB_C"/>
</dbReference>
<dbReference type="InterPro" id="IPR036388">
    <property type="entry name" value="WH-like_DNA-bd_sf"/>
</dbReference>
<dbReference type="InterPro" id="IPR036390">
    <property type="entry name" value="WH_DNA-bd_sf"/>
</dbReference>
<dbReference type="NCBIfam" id="NF000868">
    <property type="entry name" value="PRK00080.1"/>
    <property type="match status" value="1"/>
</dbReference>
<dbReference type="NCBIfam" id="TIGR00635">
    <property type="entry name" value="ruvB"/>
    <property type="match status" value="1"/>
</dbReference>
<dbReference type="PANTHER" id="PTHR42848">
    <property type="match status" value="1"/>
</dbReference>
<dbReference type="PANTHER" id="PTHR42848:SF1">
    <property type="entry name" value="HOLLIDAY JUNCTION BRANCH MIGRATION COMPLEX SUBUNIT RUVB"/>
    <property type="match status" value="1"/>
</dbReference>
<dbReference type="Pfam" id="PF17864">
    <property type="entry name" value="AAA_lid_4"/>
    <property type="match status" value="1"/>
</dbReference>
<dbReference type="Pfam" id="PF05491">
    <property type="entry name" value="RuvB_C"/>
    <property type="match status" value="1"/>
</dbReference>
<dbReference type="Pfam" id="PF05496">
    <property type="entry name" value="RuvB_N"/>
    <property type="match status" value="1"/>
</dbReference>
<dbReference type="SMART" id="SM00382">
    <property type="entry name" value="AAA"/>
    <property type="match status" value="1"/>
</dbReference>
<dbReference type="SUPFAM" id="SSF52540">
    <property type="entry name" value="P-loop containing nucleoside triphosphate hydrolases"/>
    <property type="match status" value="1"/>
</dbReference>
<dbReference type="SUPFAM" id="SSF46785">
    <property type="entry name" value="Winged helix' DNA-binding domain"/>
    <property type="match status" value="1"/>
</dbReference>
<name>RUVB_SYNY3</name>
<protein>
    <recommendedName>
        <fullName evidence="1">Holliday junction branch migration complex subunit RuvB</fullName>
        <ecNumber evidence="1">3.6.4.-</ecNumber>
    </recommendedName>
</protein>